<gene>
    <name evidence="7" type="primary">BBOF1</name>
    <name type="synonym">C14orf45</name>
    <name type="synonym">CCDC176</name>
</gene>
<name>BBOF1_HUMAN</name>
<dbReference type="EMBL" id="AC005484">
    <property type="status" value="NOT_ANNOTATED_CDS"/>
    <property type="molecule type" value="Genomic_DNA"/>
</dbReference>
<dbReference type="EMBL" id="BC044808">
    <property type="status" value="NOT_ANNOTATED_CDS"/>
    <property type="molecule type" value="mRNA"/>
</dbReference>
<dbReference type="EMBL" id="BC104979">
    <property type="protein sequence ID" value="AAI04980.1"/>
    <property type="status" value="ALT_INIT"/>
    <property type="molecule type" value="mRNA"/>
</dbReference>
<dbReference type="EMBL" id="BC104981">
    <property type="protein sequence ID" value="AAI04982.1"/>
    <property type="status" value="ALT_INIT"/>
    <property type="molecule type" value="mRNA"/>
</dbReference>
<dbReference type="EMBL" id="AL834487">
    <property type="protein sequence ID" value="CAD39145.1"/>
    <property type="molecule type" value="mRNA"/>
</dbReference>
<dbReference type="EMBL" id="AK026842">
    <property type="protein sequence ID" value="BAB15572.1"/>
    <property type="status" value="ALT_INIT"/>
    <property type="molecule type" value="mRNA"/>
</dbReference>
<dbReference type="CCDS" id="CCDS32119.2"/>
<dbReference type="RefSeq" id="NP_079333.2">
    <property type="nucleotide sequence ID" value="NM_025057.3"/>
</dbReference>
<dbReference type="SMR" id="Q8ND07"/>
<dbReference type="BioGRID" id="123128">
    <property type="interactions" value="5"/>
</dbReference>
<dbReference type="FunCoup" id="Q8ND07">
    <property type="interactions" value="90"/>
</dbReference>
<dbReference type="IntAct" id="Q8ND07">
    <property type="interactions" value="2"/>
</dbReference>
<dbReference type="MINT" id="Q8ND07"/>
<dbReference type="STRING" id="9606.ENSP00000377577"/>
<dbReference type="GlyGen" id="Q8ND07">
    <property type="glycosylation" value="1 site, 1 O-linked glycan (1 site)"/>
</dbReference>
<dbReference type="iPTMnet" id="Q8ND07"/>
<dbReference type="PhosphoSitePlus" id="Q8ND07"/>
<dbReference type="BioMuta" id="BBOF1"/>
<dbReference type="DMDM" id="134047726"/>
<dbReference type="jPOST" id="Q8ND07"/>
<dbReference type="MassIVE" id="Q8ND07"/>
<dbReference type="PaxDb" id="9606-ENSP00000377577"/>
<dbReference type="PeptideAtlas" id="Q8ND07"/>
<dbReference type="ProteomicsDB" id="72971"/>
<dbReference type="Antibodypedia" id="156">
    <property type="antibodies" value="34 antibodies from 13 providers"/>
</dbReference>
<dbReference type="DNASU" id="80127"/>
<dbReference type="Ensembl" id="ENST00000394009.5">
    <property type="protein sequence ID" value="ENSP00000377577.3"/>
    <property type="gene ID" value="ENSG00000119636.16"/>
</dbReference>
<dbReference type="GeneID" id="80127"/>
<dbReference type="KEGG" id="hsa:80127"/>
<dbReference type="MANE-Select" id="ENST00000394009.5">
    <property type="protein sequence ID" value="ENSP00000377577.3"/>
    <property type="RefSeq nucleotide sequence ID" value="NM_025057.3"/>
    <property type="RefSeq protein sequence ID" value="NP_079333.2"/>
</dbReference>
<dbReference type="UCSC" id="uc010tup.3">
    <property type="organism name" value="human"/>
</dbReference>
<dbReference type="AGR" id="HGNC:19855"/>
<dbReference type="CTD" id="80127"/>
<dbReference type="DisGeNET" id="80127"/>
<dbReference type="GeneCards" id="BBOF1"/>
<dbReference type="HGNC" id="HGNC:19855">
    <property type="gene designation" value="BBOF1"/>
</dbReference>
<dbReference type="HPA" id="ENSG00000119636">
    <property type="expression patterns" value="Tissue enhanced (testis)"/>
</dbReference>
<dbReference type="MalaCards" id="BBOF1"/>
<dbReference type="MIM" id="620496">
    <property type="type" value="gene"/>
</dbReference>
<dbReference type="neXtProt" id="NX_Q8ND07"/>
<dbReference type="OpenTargets" id="ENSG00000119636"/>
<dbReference type="PharmGKB" id="PA134886442"/>
<dbReference type="VEuPathDB" id="HostDB:ENSG00000119636"/>
<dbReference type="eggNOG" id="ENOG502QRCW">
    <property type="taxonomic scope" value="Eukaryota"/>
</dbReference>
<dbReference type="GeneTree" id="ENSGT00940000154427"/>
<dbReference type="HOGENOM" id="CLU_032853_0_0_1"/>
<dbReference type="InParanoid" id="Q8ND07"/>
<dbReference type="OMA" id="MEADKWT"/>
<dbReference type="OrthoDB" id="441129at2759"/>
<dbReference type="PAN-GO" id="Q8ND07">
    <property type="GO annotations" value="0 GO annotations based on evolutionary models"/>
</dbReference>
<dbReference type="PhylomeDB" id="Q8ND07"/>
<dbReference type="TreeFam" id="TF329828"/>
<dbReference type="PathwayCommons" id="Q8ND07"/>
<dbReference type="SignaLink" id="Q8ND07"/>
<dbReference type="BioGRID-ORCS" id="80127">
    <property type="hits" value="12 hits in 1142 CRISPR screens"/>
</dbReference>
<dbReference type="ChiTaRS" id="BBOF1">
    <property type="organism name" value="human"/>
</dbReference>
<dbReference type="GenomeRNAi" id="80127"/>
<dbReference type="Pharos" id="Q8ND07">
    <property type="development level" value="Tdark"/>
</dbReference>
<dbReference type="PRO" id="PR:Q8ND07"/>
<dbReference type="Proteomes" id="UP000005640">
    <property type="component" value="Chromosome 14"/>
</dbReference>
<dbReference type="RNAct" id="Q8ND07">
    <property type="molecule type" value="protein"/>
</dbReference>
<dbReference type="Bgee" id="ENSG00000119636">
    <property type="expression patterns" value="Expressed in bronchial epithelial cell and 188 other cell types or tissues"/>
</dbReference>
<dbReference type="ExpressionAtlas" id="Q8ND07">
    <property type="expression patterns" value="baseline and differential"/>
</dbReference>
<dbReference type="GO" id="GO:0005930">
    <property type="term" value="C:axoneme"/>
    <property type="evidence" value="ECO:0000250"/>
    <property type="project" value="UniProtKB"/>
</dbReference>
<dbReference type="GO" id="GO:0036064">
    <property type="term" value="C:ciliary basal body"/>
    <property type="evidence" value="ECO:0000250"/>
    <property type="project" value="UniProtKB"/>
</dbReference>
<dbReference type="GO" id="GO:0036126">
    <property type="term" value="C:sperm flagellum"/>
    <property type="evidence" value="ECO:0000250"/>
    <property type="project" value="UniProtKB"/>
</dbReference>
<dbReference type="GO" id="GO:0030317">
    <property type="term" value="P:flagellated sperm motility"/>
    <property type="evidence" value="ECO:0000250"/>
    <property type="project" value="UniProtKB"/>
</dbReference>
<dbReference type="GO" id="GO:0044458">
    <property type="term" value="P:motile cilium assembly"/>
    <property type="evidence" value="ECO:0000250"/>
    <property type="project" value="UniProtKB"/>
</dbReference>
<dbReference type="GO" id="GO:0007026">
    <property type="term" value="P:negative regulation of microtubule depolymerization"/>
    <property type="evidence" value="ECO:0007669"/>
    <property type="project" value="Ensembl"/>
</dbReference>
<dbReference type="GO" id="GO:0050821">
    <property type="term" value="P:protein stabilization"/>
    <property type="evidence" value="ECO:0007669"/>
    <property type="project" value="Ensembl"/>
</dbReference>
<dbReference type="GO" id="GO:0007338">
    <property type="term" value="P:single fertilization"/>
    <property type="evidence" value="ECO:0007669"/>
    <property type="project" value="Ensembl"/>
</dbReference>
<dbReference type="GO" id="GO:0007288">
    <property type="term" value="P:sperm axoneme assembly"/>
    <property type="evidence" value="ECO:0000250"/>
    <property type="project" value="UniProtKB"/>
</dbReference>
<dbReference type="InterPro" id="IPR032777">
    <property type="entry name" value="DUF4515"/>
</dbReference>
<dbReference type="PANTHER" id="PTHR14845:SF5">
    <property type="entry name" value="BASAL BODY-ORIENTATION FACTOR 1"/>
    <property type="match status" value="1"/>
</dbReference>
<dbReference type="PANTHER" id="PTHR14845">
    <property type="entry name" value="COILED-COIL DOMAIN-CONTAINING 166"/>
    <property type="match status" value="1"/>
</dbReference>
<dbReference type="Pfam" id="PF14988">
    <property type="entry name" value="DUF4515"/>
    <property type="match status" value="1"/>
</dbReference>
<evidence type="ECO:0000250" key="1">
    <source>
        <dbReference type="UniProtKB" id="A0JMY4"/>
    </source>
</evidence>
<evidence type="ECO:0000250" key="2">
    <source>
        <dbReference type="UniProtKB" id="Q3V079"/>
    </source>
</evidence>
<evidence type="ECO:0000255" key="3"/>
<evidence type="ECO:0000256" key="4">
    <source>
        <dbReference type="SAM" id="MobiDB-lite"/>
    </source>
</evidence>
<evidence type="ECO:0000269" key="5">
    <source>
    </source>
</evidence>
<evidence type="ECO:0000305" key="6"/>
<evidence type="ECO:0000312" key="7">
    <source>
        <dbReference type="HGNC" id="HGNC:19855"/>
    </source>
</evidence>
<reference key="1">
    <citation type="journal article" date="2003" name="Nature">
        <title>The DNA sequence and analysis of human chromosome 14.</title>
        <authorList>
            <person name="Heilig R."/>
            <person name="Eckenberg R."/>
            <person name="Petit J.-L."/>
            <person name="Fonknechten N."/>
            <person name="Da Silva C."/>
            <person name="Cattolico L."/>
            <person name="Levy M."/>
            <person name="Barbe V."/>
            <person name="De Berardinis V."/>
            <person name="Ureta-Vidal A."/>
            <person name="Pelletier E."/>
            <person name="Vico V."/>
            <person name="Anthouard V."/>
            <person name="Rowen L."/>
            <person name="Madan A."/>
            <person name="Qin S."/>
            <person name="Sun H."/>
            <person name="Du H."/>
            <person name="Pepin K."/>
            <person name="Artiguenave F."/>
            <person name="Robert C."/>
            <person name="Cruaud C."/>
            <person name="Bruels T."/>
            <person name="Jaillon O."/>
            <person name="Friedlander L."/>
            <person name="Samson G."/>
            <person name="Brottier P."/>
            <person name="Cure S."/>
            <person name="Segurens B."/>
            <person name="Aniere F."/>
            <person name="Samain S."/>
            <person name="Crespeau H."/>
            <person name="Abbasi N."/>
            <person name="Aiach N."/>
            <person name="Boscus D."/>
            <person name="Dickhoff R."/>
            <person name="Dors M."/>
            <person name="Dubois I."/>
            <person name="Friedman C."/>
            <person name="Gouyvenoux M."/>
            <person name="James R."/>
            <person name="Madan A."/>
            <person name="Mairey-Estrada B."/>
            <person name="Mangenot S."/>
            <person name="Martins N."/>
            <person name="Menard M."/>
            <person name="Oztas S."/>
            <person name="Ratcliffe A."/>
            <person name="Shaffer T."/>
            <person name="Trask B."/>
            <person name="Vacherie B."/>
            <person name="Bellemere C."/>
            <person name="Belser C."/>
            <person name="Besnard-Gonnet M."/>
            <person name="Bartol-Mavel D."/>
            <person name="Boutard M."/>
            <person name="Briez-Silla S."/>
            <person name="Combette S."/>
            <person name="Dufosse-Laurent V."/>
            <person name="Ferron C."/>
            <person name="Lechaplais C."/>
            <person name="Louesse C."/>
            <person name="Muselet D."/>
            <person name="Magdelenat G."/>
            <person name="Pateau E."/>
            <person name="Petit E."/>
            <person name="Sirvain-Trukniewicz P."/>
            <person name="Trybou A."/>
            <person name="Vega-Czarny N."/>
            <person name="Bataille E."/>
            <person name="Bluet E."/>
            <person name="Bordelais I."/>
            <person name="Dubois M."/>
            <person name="Dumont C."/>
            <person name="Guerin T."/>
            <person name="Haffray S."/>
            <person name="Hammadi R."/>
            <person name="Muanga J."/>
            <person name="Pellouin V."/>
            <person name="Robert D."/>
            <person name="Wunderle E."/>
            <person name="Gauguet G."/>
            <person name="Roy A."/>
            <person name="Sainte-Marthe L."/>
            <person name="Verdier J."/>
            <person name="Verdier-Discala C."/>
            <person name="Hillier L.W."/>
            <person name="Fulton L."/>
            <person name="McPherson J."/>
            <person name="Matsuda F."/>
            <person name="Wilson R."/>
            <person name="Scarpelli C."/>
            <person name="Gyapay G."/>
            <person name="Wincker P."/>
            <person name="Saurin W."/>
            <person name="Quetier F."/>
            <person name="Waterston R."/>
            <person name="Hood L."/>
            <person name="Weissenbach J."/>
        </authorList>
    </citation>
    <scope>NUCLEOTIDE SEQUENCE [LARGE SCALE GENOMIC DNA]</scope>
</reference>
<reference key="2">
    <citation type="journal article" date="2004" name="Genome Res.">
        <title>The status, quality, and expansion of the NIH full-length cDNA project: the Mammalian Gene Collection (MGC).</title>
        <authorList>
            <consortium name="The MGC Project Team"/>
        </authorList>
    </citation>
    <scope>NUCLEOTIDE SEQUENCE [LARGE SCALE MRNA]</scope>
    <source>
        <tissue>Cerebellum</tissue>
        <tissue>Testis</tissue>
    </source>
</reference>
<reference key="3">
    <citation type="journal article" date="2007" name="BMC Genomics">
        <title>The full-ORF clone resource of the German cDNA consortium.</title>
        <authorList>
            <person name="Bechtel S."/>
            <person name="Rosenfelder H."/>
            <person name="Duda A."/>
            <person name="Schmidt C.P."/>
            <person name="Ernst U."/>
            <person name="Wellenreuther R."/>
            <person name="Mehrle A."/>
            <person name="Schuster C."/>
            <person name="Bahr A."/>
            <person name="Bloecker H."/>
            <person name="Heubner D."/>
            <person name="Hoerlein A."/>
            <person name="Michel G."/>
            <person name="Wedler H."/>
            <person name="Koehrer K."/>
            <person name="Ottenwaelder B."/>
            <person name="Poustka A."/>
            <person name="Wiemann S."/>
            <person name="Schupp I."/>
        </authorList>
    </citation>
    <scope>NUCLEOTIDE SEQUENCE [LARGE SCALE MRNA] OF 202-529</scope>
    <scope>VARIANT VAL-230</scope>
    <source>
        <tissue>Testis</tissue>
    </source>
</reference>
<reference key="4">
    <citation type="journal article" date="2004" name="Nat. Genet.">
        <title>Complete sequencing and characterization of 21,243 full-length human cDNAs.</title>
        <authorList>
            <person name="Ota T."/>
            <person name="Suzuki Y."/>
            <person name="Nishikawa T."/>
            <person name="Otsuki T."/>
            <person name="Sugiyama T."/>
            <person name="Irie R."/>
            <person name="Wakamatsu A."/>
            <person name="Hayashi K."/>
            <person name="Sato H."/>
            <person name="Nagai K."/>
            <person name="Kimura K."/>
            <person name="Makita H."/>
            <person name="Sekine M."/>
            <person name="Obayashi M."/>
            <person name="Nishi T."/>
            <person name="Shibahara T."/>
            <person name="Tanaka T."/>
            <person name="Ishii S."/>
            <person name="Yamamoto J."/>
            <person name="Saito K."/>
            <person name="Kawai Y."/>
            <person name="Isono Y."/>
            <person name="Nakamura Y."/>
            <person name="Nagahari K."/>
            <person name="Murakami K."/>
            <person name="Yasuda T."/>
            <person name="Iwayanagi T."/>
            <person name="Wagatsuma M."/>
            <person name="Shiratori A."/>
            <person name="Sudo H."/>
            <person name="Hosoiri T."/>
            <person name="Kaku Y."/>
            <person name="Kodaira H."/>
            <person name="Kondo H."/>
            <person name="Sugawara M."/>
            <person name="Takahashi M."/>
            <person name="Kanda K."/>
            <person name="Yokoi T."/>
            <person name="Furuya T."/>
            <person name="Kikkawa E."/>
            <person name="Omura Y."/>
            <person name="Abe K."/>
            <person name="Kamihara K."/>
            <person name="Katsuta N."/>
            <person name="Sato K."/>
            <person name="Tanikawa M."/>
            <person name="Yamazaki M."/>
            <person name="Ninomiya K."/>
            <person name="Ishibashi T."/>
            <person name="Yamashita H."/>
            <person name="Murakawa K."/>
            <person name="Fujimori K."/>
            <person name="Tanai H."/>
            <person name="Kimata M."/>
            <person name="Watanabe M."/>
            <person name="Hiraoka S."/>
            <person name="Chiba Y."/>
            <person name="Ishida S."/>
            <person name="Ono Y."/>
            <person name="Takiguchi S."/>
            <person name="Watanabe S."/>
            <person name="Yosida M."/>
            <person name="Hotuta T."/>
            <person name="Kusano J."/>
            <person name="Kanehori K."/>
            <person name="Takahashi-Fujii A."/>
            <person name="Hara H."/>
            <person name="Tanase T.-O."/>
            <person name="Nomura Y."/>
            <person name="Togiya S."/>
            <person name="Komai F."/>
            <person name="Hara R."/>
            <person name="Takeuchi K."/>
            <person name="Arita M."/>
            <person name="Imose N."/>
            <person name="Musashino K."/>
            <person name="Yuuki H."/>
            <person name="Oshima A."/>
            <person name="Sasaki N."/>
            <person name="Aotsuka S."/>
            <person name="Yoshikawa Y."/>
            <person name="Matsunawa H."/>
            <person name="Ichihara T."/>
            <person name="Shiohata N."/>
            <person name="Sano S."/>
            <person name="Moriya S."/>
            <person name="Momiyama H."/>
            <person name="Satoh N."/>
            <person name="Takami S."/>
            <person name="Terashima Y."/>
            <person name="Suzuki O."/>
            <person name="Nakagawa S."/>
            <person name="Senoh A."/>
            <person name="Mizoguchi H."/>
            <person name="Goto Y."/>
            <person name="Shimizu F."/>
            <person name="Wakebe H."/>
            <person name="Hishigaki H."/>
            <person name="Watanabe T."/>
            <person name="Sugiyama A."/>
            <person name="Takemoto M."/>
            <person name="Kawakami B."/>
            <person name="Yamazaki M."/>
            <person name="Watanabe K."/>
            <person name="Kumagai A."/>
            <person name="Itakura S."/>
            <person name="Fukuzumi Y."/>
            <person name="Fujimori Y."/>
            <person name="Komiyama M."/>
            <person name="Tashiro H."/>
            <person name="Tanigami A."/>
            <person name="Fujiwara T."/>
            <person name="Ono T."/>
            <person name="Yamada K."/>
            <person name="Fujii Y."/>
            <person name="Ozaki K."/>
            <person name="Hirao M."/>
            <person name="Ohmori Y."/>
            <person name="Kawabata A."/>
            <person name="Hikiji T."/>
            <person name="Kobatake N."/>
            <person name="Inagaki H."/>
            <person name="Ikema Y."/>
            <person name="Okamoto S."/>
            <person name="Okitani R."/>
            <person name="Kawakami T."/>
            <person name="Noguchi S."/>
            <person name="Itoh T."/>
            <person name="Shigeta K."/>
            <person name="Senba T."/>
            <person name="Matsumura K."/>
            <person name="Nakajima Y."/>
            <person name="Mizuno T."/>
            <person name="Morinaga M."/>
            <person name="Sasaki M."/>
            <person name="Togashi T."/>
            <person name="Oyama M."/>
            <person name="Hata H."/>
            <person name="Watanabe M."/>
            <person name="Komatsu T."/>
            <person name="Mizushima-Sugano J."/>
            <person name="Satoh T."/>
            <person name="Shirai Y."/>
            <person name="Takahashi Y."/>
            <person name="Nakagawa K."/>
            <person name="Okumura K."/>
            <person name="Nagase T."/>
            <person name="Nomura N."/>
            <person name="Kikuchi H."/>
            <person name="Masuho Y."/>
            <person name="Yamashita R."/>
            <person name="Nakai K."/>
            <person name="Yada T."/>
            <person name="Nakamura Y."/>
            <person name="Ohara O."/>
            <person name="Isogai T."/>
            <person name="Sugano S."/>
        </authorList>
    </citation>
    <scope>NUCLEOTIDE SEQUENCE [LARGE SCALE MRNA] OF 283-529</scope>
    <source>
        <tissue>Lung</tissue>
    </source>
</reference>
<sequence length="529" mass="61987">MPSKGKDKKKGKSKGKDTKKLIKTDESVVDRAKANASLWEARLEVTELSRIKYRDTSRILAKSNEDLKKKQCKMEKDIMSVLSYLKKQDQEKDNMIEKLKQQLNETKEKAQEEKDKLEQKYTRQINELEGQFHQKAKEIGMIHTELKAVRQFQKRKIQVERELDDLKENLRNTERIHQETLRRLESRFFEEKHRLEQEAEKKIIMLAERAHHEAIVQLNDAGRNVFKENDYLQKALAYHLKETDALQKNSQKLQESHTLLLHQKEINDLLVKEKIMQLVQQRSQIQTLQKKVVNLETALSYMTKEFESEVLKLQQHAMIENQAGQVEIDKLQHLLQMKDREMNRVKKLAKNILDERTEVERFFLDALHQVKQQILISRKHYKQIAQAAFNLKMRAACTGRTEYPKIRTFDGREHSTNSVNQDLLEAEKWTHIEGNVDIGDLTWEQKEKVLRLLFAKMNGCPSRKYNQSSRPPVPDYVVSDSGETKEFGDESKLQDKIFITQQIAISDSSGEVVLPTIPKEPQESDTGTF</sequence>
<accession>Q8ND07</accession>
<accession>Q0P604</accession>
<accession>Q9H5P8</accession>
<keyword id="KW-0966">Cell projection</keyword>
<keyword id="KW-0969">Cilium</keyword>
<keyword id="KW-0175">Coiled coil</keyword>
<keyword id="KW-0963">Cytoplasm</keyword>
<keyword id="KW-0206">Cytoskeleton</keyword>
<keyword id="KW-0282">Flagellum</keyword>
<keyword id="KW-1267">Proteomics identification</keyword>
<keyword id="KW-1185">Reference proteome</keyword>
<proteinExistence type="evidence at protein level"/>
<organism>
    <name type="scientific">Homo sapiens</name>
    <name type="common">Human</name>
    <dbReference type="NCBI Taxonomy" id="9606"/>
    <lineage>
        <taxon>Eukaryota</taxon>
        <taxon>Metazoa</taxon>
        <taxon>Chordata</taxon>
        <taxon>Craniata</taxon>
        <taxon>Vertebrata</taxon>
        <taxon>Euteleostomi</taxon>
        <taxon>Mammalia</taxon>
        <taxon>Eutheria</taxon>
        <taxon>Euarchontoglires</taxon>
        <taxon>Primates</taxon>
        <taxon>Haplorrhini</taxon>
        <taxon>Catarrhini</taxon>
        <taxon>Hominidae</taxon>
        <taxon>Homo</taxon>
    </lineage>
</organism>
<protein>
    <recommendedName>
        <fullName evidence="7">Basal body-orientation factor 1</fullName>
    </recommendedName>
    <alternativeName>
        <fullName>Coiled-coil domain-containing protein 176</fullName>
    </alternativeName>
</protein>
<comment type="function">
    <text evidence="2">Plays an essential role in sperm motility and male fertility by stabilizing the sperm flagellar axonemal structure. May be required for the stability of ODF2 and MANS1 proteins. Dispensable for the assembly and function of motile cilia.</text>
</comment>
<comment type="subunit">
    <text evidence="2">Interacts with MNS1 and ODF2.</text>
</comment>
<comment type="subcellular location">
    <subcellularLocation>
        <location evidence="1">Cytoplasm</location>
        <location evidence="1">Cytoskeleton</location>
        <location evidence="1">Cilium basal body</location>
    </subcellularLocation>
    <subcellularLocation>
        <location evidence="2">Cytoplasm</location>
        <location evidence="2">Cytoskeleton</location>
        <location evidence="2">Flagellum axoneme</location>
    </subcellularLocation>
    <text evidence="1">Localizes to a polar structure adjacent to the basal body.</text>
</comment>
<comment type="similarity">
    <text evidence="6">Belongs to the BBOF1 family.</text>
</comment>
<comment type="sequence caution" evidence="6">
    <conflict type="erroneous initiation">
        <sequence resource="EMBL-CDS" id="AAI04980"/>
    </conflict>
    <text>Truncated N-terminus.</text>
</comment>
<comment type="sequence caution" evidence="6">
    <conflict type="erroneous initiation">
        <sequence resource="EMBL-CDS" id="AAI04982"/>
    </conflict>
    <text>Truncated N-terminus.</text>
</comment>
<comment type="sequence caution" evidence="6">
    <conflict type="erroneous initiation">
        <sequence resource="EMBL-CDS" id="BAB15572"/>
    </conflict>
    <text>Truncated N-terminus.</text>
</comment>
<comment type="sequence caution" evidence="6">
    <conflict type="frameshift">
        <sequence resource="EMBL" id="BC044808"/>
    </conflict>
</comment>
<feature type="chain" id="PRO_0000252293" description="Basal body-orientation factor 1">
    <location>
        <begin position="1"/>
        <end position="529"/>
    </location>
</feature>
<feature type="region of interest" description="Disordered" evidence="4">
    <location>
        <begin position="1"/>
        <end position="22"/>
    </location>
</feature>
<feature type="coiled-coil region" evidence="3">
    <location>
        <begin position="85"/>
        <end position="201"/>
    </location>
</feature>
<feature type="coiled-coil region" evidence="3">
    <location>
        <begin position="271"/>
        <end position="361"/>
    </location>
</feature>
<feature type="compositionally biased region" description="Basic residues" evidence="4">
    <location>
        <begin position="1"/>
        <end position="13"/>
    </location>
</feature>
<feature type="sequence variant" id="VAR_059618" description="In dbSNP:rs3784039.">
    <original>R</original>
    <variation>Q</variation>
    <location>
        <position position="58"/>
    </location>
</feature>
<feature type="sequence variant" id="VAR_059619" description="In dbSNP:rs17182762.">
    <original>R</original>
    <variation>K</variation>
    <location>
        <position position="183"/>
    </location>
</feature>
<feature type="sequence variant" id="VAR_059620" description="In dbSNP:rs3784038." evidence="5">
    <original>D</original>
    <variation>V</variation>
    <location>
        <position position="230"/>
    </location>
</feature>
<feature type="sequence variant" id="VAR_027815" description="In dbSNP:rs3742809.">
    <original>K</original>
    <variation>E</variation>
    <location>
        <position position="496"/>
    </location>
</feature>